<keyword id="KW-0007">Acetylation</keyword>
<keyword id="KW-0025">Alternative splicing</keyword>
<keyword id="KW-0090">Biological rhythms</keyword>
<keyword id="KW-0963">Cytoplasm</keyword>
<keyword id="KW-0221">Differentiation</keyword>
<keyword id="KW-0903">Direct protein sequencing</keyword>
<keyword id="KW-0227">DNA damage</keyword>
<keyword id="KW-0234">DNA repair</keyword>
<keyword id="KW-0238">DNA-binding</keyword>
<keyword id="KW-0488">Methylation</keyword>
<keyword id="KW-0496">Mitochondrion</keyword>
<keyword id="KW-0539">Nucleus</keyword>
<keyword id="KW-0597">Phosphoprotein</keyword>
<keyword id="KW-1185">Reference proteome</keyword>
<keyword id="KW-0808">Transferase</keyword>
<keyword id="KW-0833">Ubl conjugation pathway</keyword>
<feature type="chain" id="PRO_0000120341" description="E3 ubiquitin-protein ligase HUWE1">
    <location>
        <begin position="1"/>
        <end position="4377"/>
    </location>
</feature>
<feature type="domain" description="UBA" evidence="4">
    <location>
        <begin position="1316"/>
        <end position="1355"/>
    </location>
</feature>
<feature type="domain" description="UIM" evidence="14">
    <location>
        <begin position="1370"/>
        <end position="1389"/>
    </location>
</feature>
<feature type="domain" description="WWE" evidence="5">
    <location>
        <begin position="1603"/>
        <end position="1680"/>
    </location>
</feature>
<feature type="domain" description="HECT" evidence="3">
    <location>
        <begin position="4041"/>
        <end position="4377"/>
    </location>
</feature>
<feature type="region of interest" description="Disordered" evidence="6">
    <location>
        <begin position="706"/>
        <end position="758"/>
    </location>
</feature>
<feature type="region of interest" description="Disordered" evidence="6">
    <location>
        <begin position="978"/>
        <end position="1001"/>
    </location>
</feature>
<feature type="region of interest" description="Disordered" evidence="6">
    <location>
        <begin position="1018"/>
        <end position="1038"/>
    </location>
</feature>
<feature type="region of interest" description="Disordered" evidence="6">
    <location>
        <begin position="1291"/>
        <end position="1320"/>
    </location>
</feature>
<feature type="region of interest" description="Disordered" evidence="6">
    <location>
        <begin position="1396"/>
        <end position="1415"/>
    </location>
</feature>
<feature type="region of interest" description="Disordered" evidence="6">
    <location>
        <begin position="1690"/>
        <end position="1733"/>
    </location>
</feature>
<feature type="region of interest" description="Disordered" evidence="6">
    <location>
        <begin position="2019"/>
        <end position="2065"/>
    </location>
</feature>
<feature type="region of interest" description="Disordered" evidence="6">
    <location>
        <begin position="2262"/>
        <end position="2343"/>
    </location>
</feature>
<feature type="region of interest" description="Disordered" evidence="6">
    <location>
        <begin position="2355"/>
        <end position="2479"/>
    </location>
</feature>
<feature type="region of interest" description="Disordered" evidence="6">
    <location>
        <begin position="2704"/>
        <end position="2970"/>
    </location>
</feature>
<feature type="region of interest" description="Disordered" evidence="6">
    <location>
        <begin position="2991"/>
        <end position="3012"/>
    </location>
</feature>
<feature type="region of interest" description="Disordered" evidence="6">
    <location>
        <begin position="3036"/>
        <end position="3059"/>
    </location>
</feature>
<feature type="region of interest" description="Disordered" evidence="6">
    <location>
        <begin position="3243"/>
        <end position="3266"/>
    </location>
</feature>
<feature type="region of interest" description="Disordered" evidence="6">
    <location>
        <begin position="3352"/>
        <end position="3383"/>
    </location>
</feature>
<feature type="region of interest" description="Disordered" evidence="6">
    <location>
        <begin position="3405"/>
        <end position="3429"/>
    </location>
</feature>
<feature type="region of interest" description="Disordered" evidence="6">
    <location>
        <begin position="3471"/>
        <end position="3514"/>
    </location>
</feature>
<feature type="region of interest" description="Disordered" evidence="6">
    <location>
        <begin position="3539"/>
        <end position="3566"/>
    </location>
</feature>
<feature type="region of interest" description="Disordered" evidence="6">
    <location>
        <begin position="3738"/>
        <end position="3759"/>
    </location>
</feature>
<feature type="region of interest" description="Disordered" evidence="6">
    <location>
        <begin position="3782"/>
        <end position="3850"/>
    </location>
</feature>
<feature type="region of interest" description="Disordered" evidence="6">
    <location>
        <begin position="3897"/>
        <end position="3951"/>
    </location>
</feature>
<feature type="compositionally biased region" description="Acidic residues" evidence="6">
    <location>
        <begin position="725"/>
        <end position="735"/>
    </location>
</feature>
<feature type="compositionally biased region" description="Polar residues" evidence="6">
    <location>
        <begin position="737"/>
        <end position="756"/>
    </location>
</feature>
<feature type="compositionally biased region" description="Basic and acidic residues" evidence="6">
    <location>
        <begin position="1291"/>
        <end position="1302"/>
    </location>
</feature>
<feature type="compositionally biased region" description="Basic and acidic residues" evidence="6">
    <location>
        <begin position="1699"/>
        <end position="1719"/>
    </location>
</feature>
<feature type="compositionally biased region" description="Polar residues" evidence="6">
    <location>
        <begin position="2022"/>
        <end position="2033"/>
    </location>
</feature>
<feature type="compositionally biased region" description="Basic and acidic residues" evidence="6">
    <location>
        <begin position="2037"/>
        <end position="2057"/>
    </location>
</feature>
<feature type="compositionally biased region" description="Low complexity" evidence="6">
    <location>
        <begin position="2262"/>
        <end position="2271"/>
    </location>
</feature>
<feature type="compositionally biased region" description="Low complexity" evidence="6">
    <location>
        <begin position="2278"/>
        <end position="2291"/>
    </location>
</feature>
<feature type="compositionally biased region" description="Acidic residues" evidence="6">
    <location>
        <begin position="2295"/>
        <end position="2306"/>
    </location>
</feature>
<feature type="compositionally biased region" description="Acidic residues" evidence="6">
    <location>
        <begin position="2314"/>
        <end position="2325"/>
    </location>
</feature>
<feature type="compositionally biased region" description="Polar residues" evidence="6">
    <location>
        <begin position="2388"/>
        <end position="2398"/>
    </location>
</feature>
<feature type="compositionally biased region" description="Acidic residues" evidence="6">
    <location>
        <begin position="2408"/>
        <end position="2472"/>
    </location>
</feature>
<feature type="compositionally biased region" description="Basic and acidic residues" evidence="6">
    <location>
        <begin position="2704"/>
        <end position="2716"/>
    </location>
</feature>
<feature type="compositionally biased region" description="Polar residues" evidence="6">
    <location>
        <begin position="2717"/>
        <end position="2736"/>
    </location>
</feature>
<feature type="compositionally biased region" description="Low complexity" evidence="6">
    <location>
        <begin position="2738"/>
        <end position="2756"/>
    </location>
</feature>
<feature type="compositionally biased region" description="Polar residues" evidence="6">
    <location>
        <begin position="2818"/>
        <end position="2835"/>
    </location>
</feature>
<feature type="compositionally biased region" description="Polar residues" evidence="6">
    <location>
        <begin position="2847"/>
        <end position="2864"/>
    </location>
</feature>
<feature type="compositionally biased region" description="Polar residues" evidence="6">
    <location>
        <begin position="2877"/>
        <end position="2890"/>
    </location>
</feature>
<feature type="compositionally biased region" description="Low complexity" evidence="6">
    <location>
        <begin position="2913"/>
        <end position="2932"/>
    </location>
</feature>
<feature type="compositionally biased region" description="Low complexity" evidence="6">
    <location>
        <begin position="2993"/>
        <end position="3007"/>
    </location>
</feature>
<feature type="compositionally biased region" description="Basic and acidic residues" evidence="6">
    <location>
        <begin position="3355"/>
        <end position="3369"/>
    </location>
</feature>
<feature type="compositionally biased region" description="Low complexity" evidence="6">
    <location>
        <begin position="3370"/>
        <end position="3383"/>
    </location>
</feature>
<feature type="compositionally biased region" description="Low complexity" evidence="6">
    <location>
        <begin position="3475"/>
        <end position="3503"/>
    </location>
</feature>
<feature type="compositionally biased region" description="Low complexity" evidence="6">
    <location>
        <begin position="3539"/>
        <end position="3552"/>
    </location>
</feature>
<feature type="compositionally biased region" description="Low complexity" evidence="6">
    <location>
        <begin position="3749"/>
        <end position="3759"/>
    </location>
</feature>
<feature type="compositionally biased region" description="Polar residues" evidence="6">
    <location>
        <begin position="3794"/>
        <end position="3803"/>
    </location>
</feature>
<feature type="compositionally biased region" description="Polar residues" evidence="6">
    <location>
        <begin position="3817"/>
        <end position="3828"/>
    </location>
</feature>
<feature type="compositionally biased region" description="Basic and acidic residues" evidence="6">
    <location>
        <begin position="3836"/>
        <end position="3845"/>
    </location>
</feature>
<feature type="compositionally biased region" description="Basic and acidic residues" evidence="6">
    <location>
        <begin position="3897"/>
        <end position="3918"/>
    </location>
</feature>
<feature type="compositionally biased region" description="Pro residues" evidence="6">
    <location>
        <begin position="3919"/>
        <end position="3928"/>
    </location>
</feature>
<feature type="compositionally biased region" description="Polar residues" evidence="6">
    <location>
        <begin position="3941"/>
        <end position="3951"/>
    </location>
</feature>
<feature type="active site" description="Glycyl thioester intermediate" evidence="3">
    <location>
        <position position="4344"/>
    </location>
</feature>
<feature type="modified residue" description="Phosphoserine" evidence="17">
    <location>
        <position position="648"/>
    </location>
</feature>
<feature type="modified residue" description="Phosphoserine" evidence="17">
    <location>
        <position position="649"/>
    </location>
</feature>
<feature type="modified residue" description="Phosphoserine" evidence="2">
    <location>
        <position position="740"/>
    </location>
</feature>
<feature type="modified residue" description="Phosphoserine" evidence="2">
    <location>
        <position position="1084"/>
    </location>
</feature>
<feature type="modified residue" description="Phosphoserine" evidence="17">
    <location>
        <position position="1368"/>
    </location>
</feature>
<feature type="modified residue" description="Phosphoserine" evidence="2">
    <location>
        <position position="1370"/>
    </location>
</feature>
<feature type="modified residue" description="Phosphoserine" evidence="2">
    <location>
        <position position="1382"/>
    </location>
</feature>
<feature type="modified residue" description="Phosphoserine" evidence="15 17">
    <location>
        <position position="1395"/>
    </location>
</feature>
<feature type="modified residue" description="Phosphoserine" evidence="15 16 17">
    <location>
        <position position="1907"/>
    </location>
</feature>
<feature type="modified residue" description="Phosphothreonine" evidence="2">
    <location>
        <position position="2035"/>
    </location>
</feature>
<feature type="modified residue" description="Phosphoserine" evidence="2">
    <location>
        <position position="2266"/>
    </location>
</feature>
<feature type="modified residue" description="N6-acetyllysine" evidence="18">
    <location>
        <position position="2267"/>
    </location>
</feature>
<feature type="modified residue" description="Phosphoserine" evidence="17">
    <location>
        <position position="2362"/>
    </location>
</feature>
<feature type="modified residue" description="Phosphoserine" evidence="2">
    <location>
        <position position="2365"/>
    </location>
</feature>
<feature type="modified residue" description="Phosphoserine" evidence="2">
    <location>
        <position position="2391"/>
    </location>
</feature>
<feature type="modified residue" description="Phosphoserine" evidence="2">
    <location>
        <position position="2527"/>
    </location>
</feature>
<feature type="modified residue" description="Phosphoserine" evidence="2">
    <location>
        <position position="2532"/>
    </location>
</feature>
<feature type="modified residue" description="Phosphoserine" evidence="2">
    <location>
        <position position="2535"/>
    </location>
</feature>
<feature type="modified residue" description="Phosphothreonine" evidence="2">
    <location>
        <position position="2554"/>
    </location>
</feature>
<feature type="modified residue" description="Phosphoserine" evidence="2">
    <location>
        <position position="2584"/>
    </location>
</feature>
<feature type="modified residue" description="Phosphoserine" evidence="2">
    <location>
        <position position="2595"/>
    </location>
</feature>
<feature type="modified residue" description="Phosphoserine" evidence="2">
    <location>
        <position position="2619"/>
    </location>
</feature>
<feature type="modified residue" description="Phosphothreonine" evidence="2">
    <location>
        <position position="2751"/>
    </location>
</feature>
<feature type="modified residue" description="Phosphoserine" evidence="2">
    <location>
        <position position="2826"/>
    </location>
</feature>
<feature type="modified residue" description="Phosphoserine" evidence="2">
    <location>
        <position position="2833"/>
    </location>
</feature>
<feature type="modified residue" description="Phosphoserine" evidence="2">
    <location>
        <position position="2835"/>
    </location>
</feature>
<feature type="modified residue" description="Phosphoserine" evidence="2">
    <location>
        <position position="2861"/>
    </location>
</feature>
<feature type="modified residue" description="Phosphoserine" evidence="2">
    <location>
        <position position="2887"/>
    </location>
</feature>
<feature type="modified residue" description="Phosphoserine" evidence="2">
    <location>
        <position position="2888"/>
    </location>
</feature>
<feature type="modified residue" description="Phosphothreonine" evidence="2">
    <location>
        <position position="2889"/>
    </location>
</feature>
<feature type="modified residue" description="Phosphoserine" evidence="2">
    <location>
        <position position="2918"/>
    </location>
</feature>
<feature type="modified residue" description="Phosphoserine" evidence="2">
    <location>
        <position position="3116"/>
    </location>
</feature>
<feature type="modified residue" description="Phosphoserine" evidence="2">
    <location>
        <position position="3117"/>
    </location>
</feature>
<feature type="modified residue" description="Phosphoserine" evidence="2">
    <location>
        <position position="3122"/>
    </location>
</feature>
<feature type="modified residue" description="Phosphoserine" evidence="2">
    <location>
        <position position="3127"/>
    </location>
</feature>
<feature type="modified residue" description="Phosphoserine" evidence="2">
    <location>
        <position position="3135"/>
    </location>
</feature>
<feature type="modified residue" description="Omega-N-methylarginine" evidence="19">
    <location>
        <position position="3149"/>
    </location>
</feature>
<feature type="modified residue" description="Phosphoserine" evidence="2">
    <location>
        <position position="3557"/>
    </location>
</feature>
<feature type="modified residue" description="Phosphoserine" evidence="2">
    <location>
        <position position="3663"/>
    </location>
</feature>
<feature type="modified residue" description="Phosphoserine" evidence="2">
    <location>
        <position position="3753"/>
    </location>
</feature>
<feature type="modified residue" description="Phosphoserine" evidence="17">
    <location>
        <position position="3758"/>
    </location>
</feature>
<feature type="modified residue" description="Phosphoserine" evidence="2">
    <location>
        <position position="3760"/>
    </location>
</feature>
<feature type="modified residue" description="Phosphoserine" evidence="17">
    <location>
        <position position="3761"/>
    </location>
</feature>
<feature type="modified residue" description="Phosphoserine" evidence="15 17">
    <location>
        <position position="3810"/>
    </location>
</feature>
<feature type="modified residue" description="Phosphoserine" evidence="17">
    <location>
        <position position="3818"/>
    </location>
</feature>
<feature type="modified residue" description="Phosphoserine" evidence="2">
    <location>
        <position position="3830"/>
    </location>
</feature>
<feature type="modified residue" description="Phosphothreonine" evidence="2">
    <location>
        <position position="3833"/>
    </location>
</feature>
<feature type="modified residue" description="Phosphoserine" evidence="2">
    <location>
        <position position="3909"/>
    </location>
</feature>
<feature type="modified residue" description="Phosphoserine" evidence="17">
    <location>
        <position position="3922"/>
    </location>
</feature>
<feature type="modified residue" description="Phosphothreonine" evidence="17">
    <location>
        <position position="3927"/>
    </location>
</feature>
<feature type="modified residue" description="Phosphothreonine" evidence="17">
    <location>
        <position position="3930"/>
    </location>
</feature>
<feature type="modified residue" description="Phosphotyrosine" evidence="1">
    <location>
        <position position="4274"/>
    </location>
</feature>
<feature type="splice variant" id="VSP_011147" description="In isoform 2." evidence="11">
    <original>FPSHFTQQRTKETNCESD</original>
    <variation>RSLKESLTPGFFGHQHLG</variation>
    <location>
        <begin position="3347"/>
        <end position="3364"/>
    </location>
</feature>
<feature type="splice variant" id="VSP_011148" description="In isoform 2." evidence="11">
    <location>
        <begin position="3365"/>
        <end position="4377"/>
    </location>
</feature>
<feature type="splice variant" id="VSP_011149" description="In isoform 3." evidence="11">
    <location>
        <begin position="3780"/>
        <end position="3794"/>
    </location>
</feature>
<feature type="splice variant" id="VSP_011150" description="In isoform 4." evidence="13">
    <original>SESSNQSETSVRREESPMDVDQPSPSAQDTQSIVISDG</original>
    <variation>VSMMPVAPHSFLYPPSCTMSSVGVHCPYLVCFCITFAK</variation>
    <location>
        <begin position="3795"/>
        <end position="3832"/>
    </location>
</feature>
<feature type="splice variant" id="VSP_011151" description="In isoform 4." evidence="13">
    <location>
        <begin position="3833"/>
        <end position="4377"/>
    </location>
</feature>
<feature type="sequence conflict" description="In Ref. 3; AAX24124 and 1; AAV90839." evidence="14" ref="3 1">
    <original>K</original>
    <variation>R</variation>
    <location>
        <position position="253"/>
    </location>
</feature>
<feature type="sequence conflict" description="In Ref. 1; AAV90839 and 5; BAC41411." evidence="14" ref="1 5">
    <original>S</original>
    <variation>I</variation>
    <location>
        <position position="1728"/>
    </location>
</feature>
<feature type="sequence conflict" description="In Ref. 1; AAV90839, 5; BAC41411 and 8; AAH70444." evidence="14" ref="1 5 8">
    <original>E</original>
    <variation>EG</variation>
    <location>
        <position position="2032"/>
    </location>
</feature>
<accession>Q7TMY8</accession>
<accession>A2AFQ1</accession>
<accession>Q4G2Z1</accession>
<accession>Q5BMM7</accession>
<accession>Q6NS61</accession>
<accession>Q8BNJ7</accession>
<accession>Q8CFH2</accession>
<accession>Q8VD14</accession>
<accession>Q921M5</accession>
<accession>Q9R0P2</accession>
<name>HUWE1_MOUSE</name>
<proteinExistence type="evidence at protein level"/>
<evidence type="ECO:0000250" key="1">
    <source>
        <dbReference type="UniProtKB" id="P51593"/>
    </source>
</evidence>
<evidence type="ECO:0000250" key="2">
    <source>
        <dbReference type="UniProtKB" id="Q7Z6Z7"/>
    </source>
</evidence>
<evidence type="ECO:0000255" key="3">
    <source>
        <dbReference type="PROSITE-ProRule" id="PRU00104"/>
    </source>
</evidence>
<evidence type="ECO:0000255" key="4">
    <source>
        <dbReference type="PROSITE-ProRule" id="PRU00212"/>
    </source>
</evidence>
<evidence type="ECO:0000255" key="5">
    <source>
        <dbReference type="PROSITE-ProRule" id="PRU00248"/>
    </source>
</evidence>
<evidence type="ECO:0000256" key="6">
    <source>
        <dbReference type="SAM" id="MobiDB-lite"/>
    </source>
</evidence>
<evidence type="ECO:0000269" key="7">
    <source>
    </source>
</evidence>
<evidence type="ECO:0000269" key="8">
    <source>
    </source>
</evidence>
<evidence type="ECO:0000269" key="9">
    <source>
    </source>
</evidence>
<evidence type="ECO:0000269" key="10">
    <source>
    </source>
</evidence>
<evidence type="ECO:0000303" key="11">
    <source>
    </source>
</evidence>
<evidence type="ECO:0000303" key="12">
    <source>
    </source>
</evidence>
<evidence type="ECO:0000303" key="13">
    <source>
    </source>
</evidence>
<evidence type="ECO:0000305" key="14"/>
<evidence type="ECO:0007744" key="15">
    <source>
    </source>
</evidence>
<evidence type="ECO:0007744" key="16">
    <source>
    </source>
</evidence>
<evidence type="ECO:0007744" key="17">
    <source>
    </source>
</evidence>
<evidence type="ECO:0007744" key="18">
    <source>
    </source>
</evidence>
<evidence type="ECO:0007744" key="19">
    <source>
    </source>
</evidence>
<organism>
    <name type="scientific">Mus musculus</name>
    <name type="common">Mouse</name>
    <dbReference type="NCBI Taxonomy" id="10090"/>
    <lineage>
        <taxon>Eukaryota</taxon>
        <taxon>Metazoa</taxon>
        <taxon>Chordata</taxon>
        <taxon>Craniata</taxon>
        <taxon>Vertebrata</taxon>
        <taxon>Euteleostomi</taxon>
        <taxon>Mammalia</taxon>
        <taxon>Eutheria</taxon>
        <taxon>Euarchontoglires</taxon>
        <taxon>Glires</taxon>
        <taxon>Rodentia</taxon>
        <taxon>Myomorpha</taxon>
        <taxon>Muroidea</taxon>
        <taxon>Muridae</taxon>
        <taxon>Murinae</taxon>
        <taxon>Mus</taxon>
        <taxon>Mus</taxon>
    </lineage>
</organism>
<protein>
    <recommendedName>
        <fullName>E3 ubiquitin-protein ligase HUWE1</fullName>
        <ecNumber evidence="9">2.3.2.26</ecNumber>
    </recommendedName>
    <alternativeName>
        <fullName evidence="12">E3Histone</fullName>
    </alternativeName>
    <alternativeName>
        <fullName>HECT, UBA and WWE domain-containing protein 1</fullName>
    </alternativeName>
    <alternativeName>
        <fullName>HECT-type E3 ubiquitin transferase HUWE1</fullName>
    </alternativeName>
    <alternativeName>
        <fullName>Upstream regulatory element-binding protein 1</fullName>
        <shortName>URE-B1</shortName>
        <shortName>URE-binding protein 1</shortName>
    </alternativeName>
</protein>
<comment type="function">
    <text evidence="1 2 7 9 10">E3 ubiquitin-protein ligase which mediates ubiquitination and subsequent proteasomal degradation of target proteins (PubMed:15767685, PubMed:18488021). Regulates apoptosis by catalyzing the polyubiquitination and degradation of MCL1 (By similarity). Mediates monoubiquitination of DNA polymerase beta (POLB) at 'Lys-41', 'Lys-61' and 'Lys-81', thereby playing a role in base-excision repair (By similarity). Also ubiquitinates the p53/TP53 tumor suppressor and core histones including H1, H2A, H2B, H3 and H4 (PubMed:15767685). Ubiquitinates MFN2 to negatively regulate mitochondrial fusion in response to decreased stearoylation of TFRC (By similarity). Ubiquitination of MFN2 also takes place following induction of mitophagy; AMBRA1 acts as a cofactor for HUWE1-mediated ubiquitination (By similarity). Regulates neural differentiation and proliferation by catalyzing the polyubiquitination and degradation of MYCN (PubMed:18488021). May regulate abundance of CDC6 after DNA damage by polyubiquitinating and targeting CDC6 to degradation (By similarity). Mediates polyubiquitination of PA2G4 (By similarity). Acts in concert with MYCBP2 to regulate the circadian clock gene expression by promoting the lithium-induced ubiquination and degradation of NR1D1 (By similarity). Binds to an upstream initiator-like sequence in the preprodynorphin gene (By similarity). Mediates HAPSTR1 degradation, but is also a required cofactor in the pathway by which HAPSTR1 governs stress signaling (By similarity). Acts as a regulator of the JNK and NF-kappa-B signaling pathways by mediating assembly of heterotypic 'Lys-63'-/'Lys-48'-linked branched ubiquitin chains that are then recognized by TAB2: HUWE1 mediates branching of 'Lys-48'-linked chains of substrates initially modified with 'Lys-63'-linked conjugates by TRAF6 (By similarity). 'Lys-63'-/'Lys-48'-linked branched ubiquitin chains protect 'Lys-63'-linkages from CYLD deubiquitination (By similarity). Ubiquitinates PPARA in hepatocytes (PubMed:29331071).</text>
</comment>
<comment type="catalytic activity">
    <reaction evidence="9">
        <text>S-ubiquitinyl-[E2 ubiquitin-conjugating enzyme]-L-cysteine + [acceptor protein]-L-lysine = [E2 ubiquitin-conjugating enzyme]-L-cysteine + N(6)-ubiquitinyl-[acceptor protein]-L-lysine.</text>
        <dbReference type="EC" id="2.3.2.26"/>
    </reaction>
</comment>
<comment type="pathway">
    <text>Protein modification; protein ubiquitination.</text>
</comment>
<comment type="subunit">
    <text evidence="2 10">Interacts with isoform p19ARF of CDKN2A which strongly inhibits HUWE1 ubiquitin ligase activity (By similarity). Interacts with MYCN, POLB and CDC6 (By similarity). Interacts with PA2G4 (By similarity). Interacts with NR1D1 (By similarity). Interacts with AMBRA1 (By similarity). Interacts with HAPSTR1 (By similarity). Interacts with HAPSTR2 (By similarity). In hepatocytes, interacts with PAQR3; the interaction promotes PPARA poylubiquitination and STUB1-mediated degradation (PubMed:29331071).</text>
</comment>
<comment type="subcellular location">
    <subcellularLocation>
        <location evidence="8">Cytoplasm</location>
    </subcellularLocation>
    <subcellularLocation>
        <location evidence="8">Nucleus</location>
    </subcellularLocation>
    <subcellularLocation>
        <location evidence="2">Mitochondrion</location>
    </subcellularLocation>
    <text evidence="2 8">Mainly expressed in the cytoplasm of most tissues, except in the nucleus of spermatogonia, primary spermatocytes and neuronal cells (PubMed:17823942). Recruited to mitochondria following interaction with AMBRA1 (By similarity).</text>
</comment>
<comment type="alternative products">
    <event type="alternative splicing"/>
    <isoform>
        <id>Q7TMY8-1</id>
        <name>1</name>
        <sequence type="displayed"/>
    </isoform>
    <isoform>
        <id>Q7TMY8-2</id>
        <name>2</name>
        <sequence type="described" ref="VSP_011147 VSP_011148"/>
    </isoform>
    <isoform>
        <id>Q7TMY8-3</id>
        <name>3</name>
        <sequence type="described" ref="VSP_011149"/>
    </isoform>
    <isoform>
        <id>Q7TMY8-4</id>
        <name>4</name>
        <sequence type="described" ref="VSP_011150 VSP_011151"/>
    </isoform>
</comment>
<comment type="tissue specificity">
    <text evidence="8">Widely expressed.</text>
</comment>
<comment type="developmental stage">
    <text evidence="9">Expression increases during neuronal differentiation such that the cortical plate contains the highest level.</text>
</comment>
<comment type="domain">
    <text evidence="2">The HECT domain mediates inhibition of the transcriptional activity of p53.</text>
</comment>
<comment type="PTM">
    <text evidence="2">Phosphorylated on tyrosine; phosphorylation is probably required for its ability to inhibit TP53 transactivation.</text>
</comment>
<comment type="similarity">
    <text evidence="14">Belongs to the UPL family. TOM1/PTR1 subfamily.</text>
</comment>
<gene>
    <name type="primary">Huwe1</name>
    <name type="synonym">Kiaa0312</name>
    <name type="synonym">Ureb1</name>
</gene>
<reference key="1">
    <citation type="journal article" date="2005" name="Cell">
        <title>ARF-BP1/Mule is a critical mediator of the ARF tumor suppressor.</title>
        <authorList>
            <person name="Chen D."/>
            <person name="Kon N."/>
            <person name="Li M."/>
            <person name="Zhang W."/>
            <person name="Qin J."/>
            <person name="Gu W."/>
        </authorList>
    </citation>
    <scope>NUCLEOTIDE SEQUENCE [MRNA] (ISOFORM 1)</scope>
    <source>
        <strain>C57BL/6J</strain>
    </source>
</reference>
<reference key="2">
    <citation type="submission" date="2006-04" db="EMBL/GenBank/DDBJ databases">
        <authorList>
            <person name="Chen D."/>
            <person name="Kon N."/>
            <person name="Li M."/>
            <person name="Zhang W."/>
            <person name="Qin J."/>
            <person name="Gu W."/>
        </authorList>
    </citation>
    <scope>SEQUENCE REVISION TO 253; 1728; 2009-2010; 2032 AND 3034-3035</scope>
</reference>
<reference key="3">
    <citation type="journal article" date="2005" name="Mol. Cell. Biol.">
        <title>Characterization of E3Histone, a novel testis ubiquitin protein ligase which ubiquitinates histones.</title>
        <authorList>
            <person name="Liu Z."/>
            <person name="Oughtred R."/>
            <person name="Wing S.S."/>
        </authorList>
    </citation>
    <scope>NUCLEOTIDE SEQUENCE [MRNA] (ISOFORM 1)</scope>
    <scope>FUNCTION</scope>
    <source>
        <strain>C57BL/6J</strain>
    </source>
</reference>
<reference key="4">
    <citation type="journal article" date="2009" name="PLoS Biol.">
        <title>Lineage-specific biology revealed by a finished genome assembly of the mouse.</title>
        <authorList>
            <person name="Church D.M."/>
            <person name="Goodstadt L."/>
            <person name="Hillier L.W."/>
            <person name="Zody M.C."/>
            <person name="Goldstein S."/>
            <person name="She X."/>
            <person name="Bult C.J."/>
            <person name="Agarwala R."/>
            <person name="Cherry J.L."/>
            <person name="DiCuccio M."/>
            <person name="Hlavina W."/>
            <person name="Kapustin Y."/>
            <person name="Meric P."/>
            <person name="Maglott D."/>
            <person name="Birtle Z."/>
            <person name="Marques A.C."/>
            <person name="Graves T."/>
            <person name="Zhou S."/>
            <person name="Teague B."/>
            <person name="Potamousis K."/>
            <person name="Churas C."/>
            <person name="Place M."/>
            <person name="Herschleb J."/>
            <person name="Runnheim R."/>
            <person name="Forrest D."/>
            <person name="Amos-Landgraf J."/>
            <person name="Schwartz D.C."/>
            <person name="Cheng Z."/>
            <person name="Lindblad-Toh K."/>
            <person name="Eichler E.E."/>
            <person name="Ponting C.P."/>
        </authorList>
    </citation>
    <scope>NUCLEOTIDE SEQUENCE [LARGE SCALE GENOMIC DNA]</scope>
    <source>
        <strain>C57BL/6J</strain>
    </source>
</reference>
<reference key="5">
    <citation type="journal article" date="2002" name="DNA Res.">
        <title>Prediction of the coding sequences of mouse homologues of KIAA gene: I. The complete nucleotide sequences of 100 mouse KIAA-homologous cDNAs identified by screening of terminal sequences of cDNA clones randomly sampled from size-fractionated libraries.</title>
        <authorList>
            <person name="Okazaki N."/>
            <person name="Kikuno R."/>
            <person name="Ohara R."/>
            <person name="Inamoto S."/>
            <person name="Hara Y."/>
            <person name="Nagase T."/>
            <person name="Ohara O."/>
            <person name="Koga H."/>
        </authorList>
    </citation>
    <scope>NUCLEOTIDE SEQUENCE [LARGE SCALE MRNA] OF 1445-4377 (ISOFORM 1)</scope>
    <source>
        <tissue>Embryonic intestine</tissue>
    </source>
</reference>
<reference key="6">
    <citation type="submission" date="2004-06" db="EMBL/GenBank/DDBJ databases">
        <authorList>
            <person name="Okazaki N."/>
            <person name="Kikuno R."/>
            <person name="Nagase T."/>
            <person name="Ohara O."/>
            <person name="Koga H."/>
        </authorList>
    </citation>
    <scope>SEQUENCE REVISION</scope>
    <source>
        <tissue>Brain</tissue>
    </source>
</reference>
<reference key="7">
    <citation type="submission" date="2007-04" db="UniProtKB">
        <authorList>
            <person name="Lubec G."/>
            <person name="Kang S.U."/>
        </authorList>
    </citation>
    <scope>PROTEIN SEQUENCE OF 1627-1655; 3127-3133 AND 3245-3253</scope>
    <scope>IDENTIFICATION BY MASS SPECTROMETRY</scope>
    <source>
        <strain>C57BL/6J</strain>
        <tissue>Brain</tissue>
    </source>
</reference>
<reference key="8">
    <citation type="journal article" date="2004" name="Genome Res.">
        <title>The status, quality, and expansion of the NIH full-length cDNA project: the Mammalian Gene Collection (MGC).</title>
        <authorList>
            <consortium name="The MGC Project Team"/>
        </authorList>
    </citation>
    <scope>NUCLEOTIDE SEQUENCE [LARGE SCALE MRNA] OF 1630-4377 (ISOFORM 2)</scope>
    <scope>NUCLEOTIDE SEQUENCE [LARGE SCALE MRNA] OF 3283-4377 (ISOFORM 3)</scope>
    <source>
        <strain>C57BL/6J</strain>
        <strain>FVB/N-3</strain>
        <tissue>Brain</tissue>
        <tissue>Eye</tissue>
        <tissue>Mammary gland</tissue>
    </source>
</reference>
<reference key="9">
    <citation type="journal article" date="2005" name="Science">
        <title>The transcriptional landscape of the mammalian genome.</title>
        <authorList>
            <person name="Carninci P."/>
            <person name="Kasukawa T."/>
            <person name="Katayama S."/>
            <person name="Gough J."/>
            <person name="Frith M.C."/>
            <person name="Maeda N."/>
            <person name="Oyama R."/>
            <person name="Ravasi T."/>
            <person name="Lenhard B."/>
            <person name="Wells C."/>
            <person name="Kodzius R."/>
            <person name="Shimokawa K."/>
            <person name="Bajic V.B."/>
            <person name="Brenner S.E."/>
            <person name="Batalov S."/>
            <person name="Forrest A.R."/>
            <person name="Zavolan M."/>
            <person name="Davis M.J."/>
            <person name="Wilming L.G."/>
            <person name="Aidinis V."/>
            <person name="Allen J.E."/>
            <person name="Ambesi-Impiombato A."/>
            <person name="Apweiler R."/>
            <person name="Aturaliya R.N."/>
            <person name="Bailey T.L."/>
            <person name="Bansal M."/>
            <person name="Baxter L."/>
            <person name="Beisel K.W."/>
            <person name="Bersano T."/>
            <person name="Bono H."/>
            <person name="Chalk A.M."/>
            <person name="Chiu K.P."/>
            <person name="Choudhary V."/>
            <person name="Christoffels A."/>
            <person name="Clutterbuck D.R."/>
            <person name="Crowe M.L."/>
            <person name="Dalla E."/>
            <person name="Dalrymple B.P."/>
            <person name="de Bono B."/>
            <person name="Della Gatta G."/>
            <person name="di Bernardo D."/>
            <person name="Down T."/>
            <person name="Engstrom P."/>
            <person name="Fagiolini M."/>
            <person name="Faulkner G."/>
            <person name="Fletcher C.F."/>
            <person name="Fukushima T."/>
            <person name="Furuno M."/>
            <person name="Futaki S."/>
            <person name="Gariboldi M."/>
            <person name="Georgii-Hemming P."/>
            <person name="Gingeras T.R."/>
            <person name="Gojobori T."/>
            <person name="Green R.E."/>
            <person name="Gustincich S."/>
            <person name="Harbers M."/>
            <person name="Hayashi Y."/>
            <person name="Hensch T.K."/>
            <person name="Hirokawa N."/>
            <person name="Hill D."/>
            <person name="Huminiecki L."/>
            <person name="Iacono M."/>
            <person name="Ikeo K."/>
            <person name="Iwama A."/>
            <person name="Ishikawa T."/>
            <person name="Jakt M."/>
            <person name="Kanapin A."/>
            <person name="Katoh M."/>
            <person name="Kawasawa Y."/>
            <person name="Kelso J."/>
            <person name="Kitamura H."/>
            <person name="Kitano H."/>
            <person name="Kollias G."/>
            <person name="Krishnan S.P."/>
            <person name="Kruger A."/>
            <person name="Kummerfeld S.K."/>
            <person name="Kurochkin I.V."/>
            <person name="Lareau L.F."/>
            <person name="Lazarevic D."/>
            <person name="Lipovich L."/>
            <person name="Liu J."/>
            <person name="Liuni S."/>
            <person name="McWilliam S."/>
            <person name="Madan Babu M."/>
            <person name="Madera M."/>
            <person name="Marchionni L."/>
            <person name="Matsuda H."/>
            <person name="Matsuzawa S."/>
            <person name="Miki H."/>
            <person name="Mignone F."/>
            <person name="Miyake S."/>
            <person name="Morris K."/>
            <person name="Mottagui-Tabar S."/>
            <person name="Mulder N."/>
            <person name="Nakano N."/>
            <person name="Nakauchi H."/>
            <person name="Ng P."/>
            <person name="Nilsson R."/>
            <person name="Nishiguchi S."/>
            <person name="Nishikawa S."/>
            <person name="Nori F."/>
            <person name="Ohara O."/>
            <person name="Okazaki Y."/>
            <person name="Orlando V."/>
            <person name="Pang K.C."/>
            <person name="Pavan W.J."/>
            <person name="Pavesi G."/>
            <person name="Pesole G."/>
            <person name="Petrovsky N."/>
            <person name="Piazza S."/>
            <person name="Reed J."/>
            <person name="Reid J.F."/>
            <person name="Ring B.Z."/>
            <person name="Ringwald M."/>
            <person name="Rost B."/>
            <person name="Ruan Y."/>
            <person name="Salzberg S.L."/>
            <person name="Sandelin A."/>
            <person name="Schneider C."/>
            <person name="Schoenbach C."/>
            <person name="Sekiguchi K."/>
            <person name="Semple C.A."/>
            <person name="Seno S."/>
            <person name="Sessa L."/>
            <person name="Sheng Y."/>
            <person name="Shibata Y."/>
            <person name="Shimada H."/>
            <person name="Shimada K."/>
            <person name="Silva D."/>
            <person name="Sinclair B."/>
            <person name="Sperling S."/>
            <person name="Stupka E."/>
            <person name="Sugiura K."/>
            <person name="Sultana R."/>
            <person name="Takenaka Y."/>
            <person name="Taki K."/>
            <person name="Tammoja K."/>
            <person name="Tan S.L."/>
            <person name="Tang S."/>
            <person name="Taylor M.S."/>
            <person name="Tegner J."/>
            <person name="Teichmann S.A."/>
            <person name="Ueda H.R."/>
            <person name="van Nimwegen E."/>
            <person name="Verardo R."/>
            <person name="Wei C.L."/>
            <person name="Yagi K."/>
            <person name="Yamanishi H."/>
            <person name="Zabarovsky E."/>
            <person name="Zhu S."/>
            <person name="Zimmer A."/>
            <person name="Hide W."/>
            <person name="Bult C."/>
            <person name="Grimmond S.M."/>
            <person name="Teasdale R.D."/>
            <person name="Liu E.T."/>
            <person name="Brusic V."/>
            <person name="Quackenbush J."/>
            <person name="Wahlestedt C."/>
            <person name="Mattick J.S."/>
            <person name="Hume D.A."/>
            <person name="Kai C."/>
            <person name="Sasaki D."/>
            <person name="Tomaru Y."/>
            <person name="Fukuda S."/>
            <person name="Kanamori-Katayama M."/>
            <person name="Suzuki M."/>
            <person name="Aoki J."/>
            <person name="Arakawa T."/>
            <person name="Iida J."/>
            <person name="Imamura K."/>
            <person name="Itoh M."/>
            <person name="Kato T."/>
            <person name="Kawaji H."/>
            <person name="Kawagashira N."/>
            <person name="Kawashima T."/>
            <person name="Kojima M."/>
            <person name="Kondo S."/>
            <person name="Konno H."/>
            <person name="Nakano K."/>
            <person name="Ninomiya N."/>
            <person name="Nishio T."/>
            <person name="Okada M."/>
            <person name="Plessy C."/>
            <person name="Shibata K."/>
            <person name="Shiraki T."/>
            <person name="Suzuki S."/>
            <person name="Tagami M."/>
            <person name="Waki K."/>
            <person name="Watahiki A."/>
            <person name="Okamura-Oho Y."/>
            <person name="Suzuki H."/>
            <person name="Kawai J."/>
            <person name="Hayashizaki Y."/>
        </authorList>
    </citation>
    <scope>NUCLEOTIDE SEQUENCE [LARGE SCALE MRNA] OF 3421-4377 (ISOFORM 4)</scope>
    <source>
        <strain>C57BL/6J</strain>
    </source>
</reference>
<reference key="10">
    <citation type="submission" date="1999-04" db="EMBL/GenBank/DDBJ databases">
        <title>Mouse homolog to KIAA0312.</title>
        <authorList>
            <person name="Seki N."/>
            <person name="Hattori A."/>
            <person name="Hayashi A."/>
            <person name="Kozuma S."/>
            <person name="Muramatsu M."/>
            <person name="Saito T."/>
        </authorList>
    </citation>
    <scope>NUCLEOTIDE SEQUENCE [MRNA] OF 4005-4377 (ISOFORMS 1/3)</scope>
</reference>
<reference key="11">
    <citation type="journal article" date="2004" name="Mol. Cell. Proteomics">
        <title>Phosphoproteomic analysis of the developing mouse brain.</title>
        <authorList>
            <person name="Ballif B.A."/>
            <person name="Villen J."/>
            <person name="Beausoleil S.A."/>
            <person name="Schwartz D."/>
            <person name="Gygi S.P."/>
        </authorList>
    </citation>
    <scope>IDENTIFICATION BY MASS SPECTROMETRY [LARGE SCALE ANALYSIS]</scope>
    <source>
        <tissue>Embryonic brain</tissue>
    </source>
</reference>
<reference key="12">
    <citation type="journal article" date="2007" name="Dev. Dyn.">
        <title>Regulated expression of the ubiquitin protein ligase, E3(Histone)/LASU1/Mule/ARF-BP1/HUWE1, during spermatogenesis.</title>
        <authorList>
            <person name="Liu Z."/>
            <person name="Miao D."/>
            <person name="Xia Q."/>
            <person name="Hermo L."/>
            <person name="Wing S.S."/>
        </authorList>
    </citation>
    <scope>SUBCELLULAR LOCATION</scope>
    <scope>TISSUE SPECIFICITY</scope>
</reference>
<reference key="13">
    <citation type="journal article" date="2007" name="Proc. Natl. Acad. Sci. U.S.A.">
        <title>Large-scale phosphorylation analysis of mouse liver.</title>
        <authorList>
            <person name="Villen J."/>
            <person name="Beausoleil S.A."/>
            <person name="Gerber S.A."/>
            <person name="Gygi S.P."/>
        </authorList>
    </citation>
    <scope>PHOSPHORYLATION [LARGE SCALE ANALYSIS] AT SER-1395; SER-1907 AND SER-3810</scope>
    <scope>IDENTIFICATION BY MASS SPECTROMETRY [LARGE SCALE ANALYSIS]</scope>
    <source>
        <tissue>Liver</tissue>
    </source>
</reference>
<reference key="14">
    <citation type="journal article" date="2008" name="Nat. Cell Biol.">
        <title>The HECT-domain ubiquitin ligase Huwe1 controls neural differentiation and proliferation by destabilizing the N-Myc oncoprotein.</title>
        <authorList>
            <person name="Zhao X."/>
            <person name="Heng J.I.-T."/>
            <person name="Guardavaccaro D."/>
            <person name="Jiang R."/>
            <person name="Pagano M."/>
            <person name="Guillemot F."/>
            <person name="Iavarone A."/>
            <person name="Lasorella A."/>
        </authorList>
    </citation>
    <scope>FUNCTION</scope>
    <scope>CATALYTIC ACTIVITY</scope>
    <scope>DEVELOPMENTAL STAGE</scope>
</reference>
<reference key="15">
    <citation type="journal article" date="2009" name="Mol. Cell. Proteomics">
        <title>Large scale localization of protein phosphorylation by use of electron capture dissociation mass spectrometry.</title>
        <authorList>
            <person name="Sweet S.M."/>
            <person name="Bailey C.M."/>
            <person name="Cunningham D.L."/>
            <person name="Heath J.K."/>
            <person name="Cooper H.J."/>
        </authorList>
    </citation>
    <scope>PHOSPHORYLATION [LARGE SCALE ANALYSIS] AT SER-1907</scope>
    <scope>IDENTIFICATION BY MASS SPECTROMETRY [LARGE SCALE ANALYSIS]</scope>
    <source>
        <tissue>Embryonic fibroblast</tissue>
    </source>
</reference>
<reference key="16">
    <citation type="journal article" date="2010" name="Cell">
        <title>A tissue-specific atlas of mouse protein phosphorylation and expression.</title>
        <authorList>
            <person name="Huttlin E.L."/>
            <person name="Jedrychowski M.P."/>
            <person name="Elias J.E."/>
            <person name="Goswami T."/>
            <person name="Rad R."/>
            <person name="Beausoleil S.A."/>
            <person name="Villen J."/>
            <person name="Haas W."/>
            <person name="Sowa M.E."/>
            <person name="Gygi S.P."/>
        </authorList>
    </citation>
    <scope>PHOSPHORYLATION [LARGE SCALE ANALYSIS] AT SER-648; SER-649; SER-1368; SER-1395; SER-1907; SER-2362; SER-3758; SER-3761; SER-3810; SER-3818; SER-3922; THR-3927 AND THR-3930</scope>
    <scope>IDENTIFICATION BY MASS SPECTROMETRY [LARGE SCALE ANALYSIS]</scope>
    <source>
        <tissue>Brain</tissue>
        <tissue>Brown adipose tissue</tissue>
        <tissue>Heart</tissue>
        <tissue>Kidney</tissue>
        <tissue>Liver</tissue>
        <tissue>Lung</tissue>
        <tissue>Pancreas</tissue>
        <tissue>Spleen</tissue>
        <tissue>Testis</tissue>
    </source>
</reference>
<reference key="17">
    <citation type="journal article" date="2010" name="Proc. Natl. Acad. Sci. U.S.A.">
        <title>E3 ligases Arf-bp1 and Pam mediate lithium-stimulated degradation of the circadian heme receptor Rev-erb alpha.</title>
        <authorList>
            <person name="Yin L."/>
            <person name="Joshi S."/>
            <person name="Wu N."/>
            <person name="Tong X."/>
            <person name="Lazar M.A."/>
        </authorList>
    </citation>
    <scope>FUNCTION</scope>
</reference>
<reference key="18">
    <citation type="journal article" date="2013" name="Mol. Cell">
        <title>SIRT5-mediated lysine desuccinylation impacts diverse metabolic pathways.</title>
        <authorList>
            <person name="Park J."/>
            <person name="Chen Y."/>
            <person name="Tishkoff D.X."/>
            <person name="Peng C."/>
            <person name="Tan M."/>
            <person name="Dai L."/>
            <person name="Xie Z."/>
            <person name="Zhang Y."/>
            <person name="Zwaans B.M."/>
            <person name="Skinner M.E."/>
            <person name="Lombard D.B."/>
            <person name="Zhao Y."/>
        </authorList>
    </citation>
    <scope>ACETYLATION [LARGE SCALE ANALYSIS] AT LYS-2267</scope>
    <scope>IDENTIFICATION BY MASS SPECTROMETRY [LARGE SCALE ANALYSIS]</scope>
    <source>
        <tissue>Embryonic fibroblast</tissue>
    </source>
</reference>
<reference key="19">
    <citation type="journal article" date="2014" name="Mol. Cell. Proteomics">
        <title>Immunoaffinity enrichment and mass spectrometry analysis of protein methylation.</title>
        <authorList>
            <person name="Guo A."/>
            <person name="Gu H."/>
            <person name="Zhou J."/>
            <person name="Mulhern D."/>
            <person name="Wang Y."/>
            <person name="Lee K.A."/>
            <person name="Yang V."/>
            <person name="Aguiar M."/>
            <person name="Kornhauser J."/>
            <person name="Jia X."/>
            <person name="Ren J."/>
            <person name="Beausoleil S.A."/>
            <person name="Silva J.C."/>
            <person name="Vemulapalli V."/>
            <person name="Bedford M.T."/>
            <person name="Comb M.J."/>
        </authorList>
    </citation>
    <scope>METHYLATION [LARGE SCALE ANALYSIS] AT ARG-3149</scope>
    <scope>IDENTIFICATION BY MASS SPECTROMETRY [LARGE SCALE ANALYSIS]</scope>
    <source>
        <tissue>Brain</tissue>
    </source>
</reference>
<reference key="20">
    <citation type="journal article" date="2018" name="Hepatology">
        <title>Hepatic PPARalpha function is controlled by polyubiquitination and proteasome-mediated degradation through the coordinated actions of PAQR3 and HUWE1.</title>
        <authorList>
            <person name="Zhao Z."/>
            <person name="Xu D."/>
            <person name="Wang Z."/>
            <person name="Wang L."/>
            <person name="Han R."/>
            <person name="Wang Z."/>
            <person name="Liao L."/>
            <person name="Chen Y."/>
        </authorList>
    </citation>
    <scope>INTERACTION WITH PAQR3</scope>
    <scope>FUNCTION</scope>
</reference>
<dbReference type="EC" id="2.3.2.26" evidence="9"/>
<dbReference type="EMBL" id="AY772010">
    <property type="protein sequence ID" value="AAV90839.3"/>
    <property type="molecule type" value="mRNA"/>
</dbReference>
<dbReference type="EMBL" id="AY929611">
    <property type="protein sequence ID" value="AAX24124.1"/>
    <property type="molecule type" value="mRNA"/>
</dbReference>
<dbReference type="EMBL" id="AL672180">
    <property type="status" value="NOT_ANNOTATED_CDS"/>
    <property type="molecule type" value="Genomic_DNA"/>
</dbReference>
<dbReference type="EMBL" id="AL954855">
    <property type="status" value="NOT_ANNOTATED_CDS"/>
    <property type="molecule type" value="Genomic_DNA"/>
</dbReference>
<dbReference type="EMBL" id="BX571795">
    <property type="status" value="NOT_ANNOTATED_CDS"/>
    <property type="molecule type" value="Genomic_DNA"/>
</dbReference>
<dbReference type="EMBL" id="AB093227">
    <property type="protein sequence ID" value="BAC41411.2"/>
    <property type="molecule type" value="mRNA"/>
</dbReference>
<dbReference type="EMBL" id="BC011391">
    <property type="protein sequence ID" value="AAH11391.1"/>
    <property type="molecule type" value="mRNA"/>
</dbReference>
<dbReference type="EMBL" id="BC017642">
    <property type="protein sequence ID" value="AAH17642.2"/>
    <property type="molecule type" value="mRNA"/>
</dbReference>
<dbReference type="EMBL" id="BC054372">
    <property type="protein sequence ID" value="AAH54372.1"/>
    <property type="molecule type" value="mRNA"/>
</dbReference>
<dbReference type="EMBL" id="BC070444">
    <property type="protein sequence ID" value="AAH70444.1"/>
    <property type="molecule type" value="mRNA"/>
</dbReference>
<dbReference type="EMBL" id="AK083499">
    <property type="protein sequence ID" value="BAC38936.1"/>
    <property type="molecule type" value="mRNA"/>
</dbReference>
<dbReference type="EMBL" id="AB025966">
    <property type="protein sequence ID" value="BAA84697.1"/>
    <property type="molecule type" value="mRNA"/>
</dbReference>
<dbReference type="RefSeq" id="NP_067498.4">
    <property type="nucleotide sequence ID" value="NM_021523.4"/>
</dbReference>
<dbReference type="SMR" id="Q7TMY8"/>
<dbReference type="BioGRID" id="208493">
    <property type="interactions" value="97"/>
</dbReference>
<dbReference type="FunCoup" id="Q7TMY8">
    <property type="interactions" value="5062"/>
</dbReference>
<dbReference type="IntAct" id="Q7TMY8">
    <property type="interactions" value="51"/>
</dbReference>
<dbReference type="MINT" id="Q7TMY8"/>
<dbReference type="STRING" id="10090.ENSMUSP00000026292"/>
<dbReference type="GlyGen" id="Q7TMY8">
    <property type="glycosylation" value="12 sites, 2 N-linked glycans (2 sites), 1 O-linked glycan (4 sites)"/>
</dbReference>
<dbReference type="iPTMnet" id="Q7TMY8"/>
<dbReference type="PhosphoSitePlus" id="Q7TMY8"/>
<dbReference type="SwissPalm" id="Q7TMY8"/>
<dbReference type="jPOST" id="Q7TMY8"/>
<dbReference type="PaxDb" id="10090-ENSMUSP00000026292"/>
<dbReference type="PeptideAtlas" id="Q7TMY8"/>
<dbReference type="ProteomicsDB" id="273355">
    <molecule id="Q7TMY8-1"/>
</dbReference>
<dbReference type="ProteomicsDB" id="273356">
    <molecule id="Q7TMY8-2"/>
</dbReference>
<dbReference type="ProteomicsDB" id="273357">
    <molecule id="Q7TMY8-3"/>
</dbReference>
<dbReference type="ProteomicsDB" id="273358">
    <molecule id="Q7TMY8-4"/>
</dbReference>
<dbReference type="Pumba" id="Q7TMY8"/>
<dbReference type="Antibodypedia" id="448">
    <property type="antibodies" value="179 antibodies from 35 providers"/>
</dbReference>
<dbReference type="DNASU" id="59026"/>
<dbReference type="Ensembl" id="ENSMUST00000112622.8">
    <molecule id="Q7TMY8-1"/>
    <property type="protein sequence ID" value="ENSMUSP00000108241.2"/>
    <property type="gene ID" value="ENSMUSG00000025261.19"/>
</dbReference>
<dbReference type="GeneID" id="59026"/>
<dbReference type="KEGG" id="mmu:59026"/>
<dbReference type="UCSC" id="uc009upq.2">
    <molecule id="Q7TMY8-1"/>
    <property type="organism name" value="mouse"/>
</dbReference>
<dbReference type="UCSC" id="uc009upr.1">
    <molecule id="Q7TMY8-2"/>
    <property type="organism name" value="mouse"/>
</dbReference>
<dbReference type="AGR" id="MGI:1926884"/>
<dbReference type="CTD" id="10075"/>
<dbReference type="MGI" id="MGI:1926884">
    <property type="gene designation" value="Huwe1"/>
</dbReference>
<dbReference type="VEuPathDB" id="HostDB:ENSMUSG00000025261"/>
<dbReference type="eggNOG" id="KOG0939">
    <property type="taxonomic scope" value="Eukaryota"/>
</dbReference>
<dbReference type="GeneTree" id="ENSGT00940000156319"/>
<dbReference type="HOGENOM" id="CLU_000058_0_0_1"/>
<dbReference type="InParanoid" id="Q7TMY8"/>
<dbReference type="Reactome" id="R-MMU-6798695">
    <property type="pathway name" value="Neutrophil degranulation"/>
</dbReference>
<dbReference type="Reactome" id="R-MMU-983168">
    <property type="pathway name" value="Antigen processing: Ubiquitination &amp; Proteasome degradation"/>
</dbReference>
<dbReference type="UniPathway" id="UPA00143"/>
<dbReference type="BioGRID-ORCS" id="59026">
    <property type="hits" value="33 hits in 121 CRISPR screens"/>
</dbReference>
<dbReference type="ChiTaRS" id="Huwe1">
    <property type="organism name" value="mouse"/>
</dbReference>
<dbReference type="PRO" id="PR:Q7TMY8"/>
<dbReference type="Proteomes" id="UP000000589">
    <property type="component" value="Chromosome X"/>
</dbReference>
<dbReference type="RNAct" id="Q7TMY8">
    <property type="molecule type" value="protein"/>
</dbReference>
<dbReference type="Bgee" id="ENSMUSG00000025261">
    <property type="expression patterns" value="Expressed in embryonic post-anal tail and 265 other cell types or tissues"/>
</dbReference>
<dbReference type="ExpressionAtlas" id="Q7TMY8">
    <property type="expression patterns" value="baseline and differential"/>
</dbReference>
<dbReference type="GO" id="GO:0005737">
    <property type="term" value="C:cytoplasm"/>
    <property type="evidence" value="ECO:0000250"/>
    <property type="project" value="UniProtKB"/>
</dbReference>
<dbReference type="GO" id="GO:0005739">
    <property type="term" value="C:mitochondrion"/>
    <property type="evidence" value="ECO:0007669"/>
    <property type="project" value="UniProtKB-SubCell"/>
</dbReference>
<dbReference type="GO" id="GO:0005634">
    <property type="term" value="C:nucleus"/>
    <property type="evidence" value="ECO:0000250"/>
    <property type="project" value="UniProtKB"/>
</dbReference>
<dbReference type="GO" id="GO:0003677">
    <property type="term" value="F:DNA binding"/>
    <property type="evidence" value="ECO:0000250"/>
    <property type="project" value="UniProtKB"/>
</dbReference>
<dbReference type="GO" id="GO:0140852">
    <property type="term" value="F:histone ubiquitin ligase activity"/>
    <property type="evidence" value="ECO:0000250"/>
    <property type="project" value="UniProtKB"/>
</dbReference>
<dbReference type="GO" id="GO:0061630">
    <property type="term" value="F:ubiquitin protein ligase activity"/>
    <property type="evidence" value="ECO:0000314"/>
    <property type="project" value="UniProtKB"/>
</dbReference>
<dbReference type="GO" id="GO:0004842">
    <property type="term" value="F:ubiquitin-protein transferase activity"/>
    <property type="evidence" value="ECO:0000250"/>
    <property type="project" value="UniProtKB"/>
</dbReference>
<dbReference type="GO" id="GO:0006284">
    <property type="term" value="P:base-excision repair"/>
    <property type="evidence" value="ECO:0000250"/>
    <property type="project" value="UniProtKB"/>
</dbReference>
<dbReference type="GO" id="GO:0030154">
    <property type="term" value="P:cell differentiation"/>
    <property type="evidence" value="ECO:0007669"/>
    <property type="project" value="UniProtKB-KW"/>
</dbReference>
<dbReference type="GO" id="GO:0032922">
    <property type="term" value="P:circadian regulation of gene expression"/>
    <property type="evidence" value="ECO:0000315"/>
    <property type="project" value="UniProtKB"/>
</dbReference>
<dbReference type="GO" id="GO:0035359">
    <property type="term" value="P:negative regulation of peroxisome proliferator activated receptor signaling pathway"/>
    <property type="evidence" value="ECO:0000314"/>
    <property type="project" value="UniProtKB"/>
</dbReference>
<dbReference type="GO" id="GO:0043123">
    <property type="term" value="P:positive regulation of canonical NF-kappaB signal transduction"/>
    <property type="evidence" value="ECO:0000250"/>
    <property type="project" value="UniProtKB"/>
</dbReference>
<dbReference type="GO" id="GO:0031398">
    <property type="term" value="P:positive regulation of protein ubiquitination"/>
    <property type="evidence" value="ECO:0000314"/>
    <property type="project" value="UniProtKB"/>
</dbReference>
<dbReference type="GO" id="GO:0043161">
    <property type="term" value="P:proteasome-mediated ubiquitin-dependent protein catabolic process"/>
    <property type="evidence" value="ECO:0000314"/>
    <property type="project" value="UniProtKB"/>
</dbReference>
<dbReference type="GO" id="GO:0141198">
    <property type="term" value="P:protein branched polyubiquitination"/>
    <property type="evidence" value="ECO:0000250"/>
    <property type="project" value="UniProtKB"/>
</dbReference>
<dbReference type="GO" id="GO:0070936">
    <property type="term" value="P:protein K48-linked ubiquitination"/>
    <property type="evidence" value="ECO:0000250"/>
    <property type="project" value="UniProtKB"/>
</dbReference>
<dbReference type="GO" id="GO:0006513">
    <property type="term" value="P:protein monoubiquitination"/>
    <property type="evidence" value="ECO:0000250"/>
    <property type="project" value="UniProtKB"/>
</dbReference>
<dbReference type="GO" id="GO:0000209">
    <property type="term" value="P:protein polyubiquitination"/>
    <property type="evidence" value="ECO:0000250"/>
    <property type="project" value="UniProtKB"/>
</dbReference>
<dbReference type="CDD" id="cd00078">
    <property type="entry name" value="HECTc"/>
    <property type="match status" value="1"/>
</dbReference>
<dbReference type="CDD" id="cd14288">
    <property type="entry name" value="UBA_HUWE1"/>
    <property type="match status" value="1"/>
</dbReference>
<dbReference type="FunFam" id="3.30.2160.10:FF:000007">
    <property type="entry name" value="E3 ubiquitin-protein ligase HUWE1 isoform X2"/>
    <property type="match status" value="1"/>
</dbReference>
<dbReference type="FunFam" id="3.30.2410.10:FF:000004">
    <property type="entry name" value="E3 ubiquitin-protein ligase HUWE1, variant"/>
    <property type="match status" value="1"/>
</dbReference>
<dbReference type="FunFam" id="3.90.1750.10:FF:000003">
    <property type="entry name" value="E3 ubiquitin-protein ligase UPL1"/>
    <property type="match status" value="1"/>
</dbReference>
<dbReference type="FunFam" id="1.10.8.10:FF:000019">
    <property type="entry name" value="Putative e3 ubiquitin-protein ligase huwe1 isoform x2"/>
    <property type="match status" value="1"/>
</dbReference>
<dbReference type="FunFam" id="3.30.720.50:FF:000002">
    <property type="entry name" value="Putative e3 ubiquitin-protein ligase huwe1 isoform x2"/>
    <property type="match status" value="1"/>
</dbReference>
<dbReference type="Gene3D" id="3.30.720.50">
    <property type="match status" value="1"/>
</dbReference>
<dbReference type="Gene3D" id="6.10.250.1630">
    <property type="match status" value="1"/>
</dbReference>
<dbReference type="Gene3D" id="1.10.8.10">
    <property type="entry name" value="DNA helicase RuvA subunit, C-terminal domain"/>
    <property type="match status" value="1"/>
</dbReference>
<dbReference type="Gene3D" id="3.30.2160.10">
    <property type="entry name" value="Hect, E3 ligase catalytic domain"/>
    <property type="match status" value="1"/>
</dbReference>
<dbReference type="Gene3D" id="3.30.2410.10">
    <property type="entry name" value="Hect, E3 ligase catalytic domain"/>
    <property type="match status" value="1"/>
</dbReference>
<dbReference type="Gene3D" id="3.90.1750.10">
    <property type="entry name" value="Hect, E3 ligase catalytic domains"/>
    <property type="match status" value="1"/>
</dbReference>
<dbReference type="InterPro" id="IPR016024">
    <property type="entry name" value="ARM-type_fold"/>
</dbReference>
<dbReference type="InterPro" id="IPR010309">
    <property type="entry name" value="E3_Ub_ligase_DUF908"/>
</dbReference>
<dbReference type="InterPro" id="IPR010314">
    <property type="entry name" value="E3_Ub_ligase_DUF913"/>
</dbReference>
<dbReference type="InterPro" id="IPR050409">
    <property type="entry name" value="E3_ubiq-protein_ligase"/>
</dbReference>
<dbReference type="InterPro" id="IPR000569">
    <property type="entry name" value="HECT_dom"/>
</dbReference>
<dbReference type="InterPro" id="IPR035983">
    <property type="entry name" value="Hect_E3_ubiquitin_ligase"/>
</dbReference>
<dbReference type="InterPro" id="IPR025527">
    <property type="entry name" value="HUWE1/Rev1_UBM"/>
</dbReference>
<dbReference type="InterPro" id="IPR015940">
    <property type="entry name" value="UBA"/>
</dbReference>
<dbReference type="InterPro" id="IPR009060">
    <property type="entry name" value="UBA-like_sf"/>
</dbReference>
<dbReference type="InterPro" id="IPR041918">
    <property type="entry name" value="UBA_HUWE1"/>
</dbReference>
<dbReference type="InterPro" id="IPR004170">
    <property type="entry name" value="WWE_dom"/>
</dbReference>
<dbReference type="InterPro" id="IPR037197">
    <property type="entry name" value="WWE_dom_sf"/>
</dbReference>
<dbReference type="PANTHER" id="PTHR11254:SF67">
    <property type="entry name" value="E3 UBIQUITIN-PROTEIN LIGASE HUWE1"/>
    <property type="match status" value="1"/>
</dbReference>
<dbReference type="PANTHER" id="PTHR11254">
    <property type="entry name" value="HECT DOMAIN UBIQUITIN-PROTEIN LIGASE"/>
    <property type="match status" value="1"/>
</dbReference>
<dbReference type="Pfam" id="PF06012">
    <property type="entry name" value="DUF908"/>
    <property type="match status" value="1"/>
</dbReference>
<dbReference type="Pfam" id="PF06025">
    <property type="entry name" value="DUF913"/>
    <property type="match status" value="1"/>
</dbReference>
<dbReference type="Pfam" id="PF00632">
    <property type="entry name" value="HECT"/>
    <property type="match status" value="1"/>
</dbReference>
<dbReference type="Pfam" id="PF22562">
    <property type="entry name" value="UBA_7"/>
    <property type="match status" value="1"/>
</dbReference>
<dbReference type="Pfam" id="PF14377">
    <property type="entry name" value="UBM"/>
    <property type="match status" value="3"/>
</dbReference>
<dbReference type="Pfam" id="PF02825">
    <property type="entry name" value="WWE"/>
    <property type="match status" value="1"/>
</dbReference>
<dbReference type="SMART" id="SM00119">
    <property type="entry name" value="HECTc"/>
    <property type="match status" value="1"/>
</dbReference>
<dbReference type="SMART" id="SM00165">
    <property type="entry name" value="UBA"/>
    <property type="match status" value="1"/>
</dbReference>
<dbReference type="SUPFAM" id="SSF48371">
    <property type="entry name" value="ARM repeat"/>
    <property type="match status" value="1"/>
</dbReference>
<dbReference type="SUPFAM" id="SSF56204">
    <property type="entry name" value="Hect, E3 ligase catalytic domain"/>
    <property type="match status" value="1"/>
</dbReference>
<dbReference type="SUPFAM" id="SSF46934">
    <property type="entry name" value="UBA-like"/>
    <property type="match status" value="1"/>
</dbReference>
<dbReference type="SUPFAM" id="SSF117839">
    <property type="entry name" value="WWE domain"/>
    <property type="match status" value="1"/>
</dbReference>
<dbReference type="PROSITE" id="PS50237">
    <property type="entry name" value="HECT"/>
    <property type="match status" value="1"/>
</dbReference>
<dbReference type="PROSITE" id="PS50030">
    <property type="entry name" value="UBA"/>
    <property type="match status" value="1"/>
</dbReference>
<dbReference type="PROSITE" id="PS50918">
    <property type="entry name" value="WWE"/>
    <property type="match status" value="1"/>
</dbReference>
<sequence>MKVDRTKLKKTPTEAPADCRALIDKLKVCNDEQLLLELQQIKTWNIGKCELYHWVDLLDRFDGILADAGQTVENMSWMLVCDRPEKEQLKMLLLAVLNFTALLIEYSFSRHLYSSIEHLTTLLASSDMQVVLAVLNLLYVFSKRSNYITRLGSDKRTPLLTRLQHLAESWGGKENGFGLAECCRDLQMLKYPPSATTLHFEFYADPGAEVKIEKRTTSNTLHYIHIEQLDKISESPSEIMESLTKMYSIPKDKQMLLFTHIRLAHGFSNHRKRLQAVQARLHAISILVYSNALQESANSILYNGLIEELVDVLQITDKQLMEIKAASLRTLTSIVHLERTPKLSSIIDCTGTASYHGFLPVLVRNCIQAMIDPSMDPYPHQFATALFSFLYHLASYDAGGEALVSCGMMEALLKVIKFLGDEQDQITFVTRAVRVVDLITNLDMAAFQSHSGLSIFIYRLEHEVDLCRKECPFVIKPKIQRPSTTQEGEEMETDMDGVQCIPQRAALLKSMLNFLKKAIQDPAFSDGIRHVMDGSLPTSLKHIISNAEYYGPSLFLLATEVVTVFVFQEPSLLSSLQDNGLTDVMLHALLIKDVPATREVLGSLPNVFSALCLNARGLQSFVQCQPFERLFKVLLSPDYLPAMRRRRSSDPLGDTASNLGSAVDELMRHQPTLKTDATTAIIKLLEEICNLGRDPKYICQKPSIQKADGTATAPPPRSNHAAEEASSEDEEEEEVQAMQSFNSAQQNETEPNQQVVGTEERIPIPLMDYILNVMKFVESILSNNTTDDHCQEFVNQKGLLPLVTILGLPNLPIDFPTSAACQAVAGVCKSILTLSHEPKVLQEGLLQLDLILSSLEPLHRPIESPGGSVLLRELACAGNVADATLSAQATPLLHALTAAHAYIMMFVHTCRVGQSEIRSISVNQWGSQLGLSVLSKLSQLYCSLVWESTVLLSLCTPNSLPSGCEFGQADMQKLVPKDEKAGTTQGGKRSDGEQDGTAGSMDASAQGLLEGIELDGDTLAPMETDEPSSSDSKGKSKITPAMAARIKQIKPLLSASSRLGRALAELFGLLVKLCVGSPVRQRRSHHAASTTTAPTPAARSTASALTKLLTKGLSWQPPPYTPTPRFRLTFFICSVGFTSPMLFDERKYPYHLMLQKFLCSGGHNALFETFNWALSMGGKVPVSEGLEHSDLPDGTGEFLDAWLMLVEKMVNPTTVLESPHSLPAKLPGGVQSFPQFSALRFLVVTQKAAFTCIKNLWNRKPLKVYGGRMAESMLAILCHILRGEPVIRERLSKEKEGSRGEEEAGQEEGGSRREPQVNQQQLQQLMDMGFTREHAMEALLNTSTMEQATEYLLTHPPPIIGGVVRDLSMSEEDQMMRAIAMSLGQDIPMDQRAESPEEVACRKEEEERKAREKQEEEEAKCLEKFQDADPLEQDELHTFTDTMLPGCFHLLDELPDTVYRVCDLIMTAIKRNGADYRDMILKQVVNQVWEAADVLIKAALPLTTSDTKTVSEWISQMATLPQASNLATRILLLTLLFEELKLPCAWVVESSGILNVLIKLLEVVQPCLQAAKEQKEVQTPKWITPVLLLIDFYEKTAISSKRRAQMTKYLQSNSNNWRWFDDRSGRWCSYSASNNSTIDSAWKSGETSVRFTAGRRRYTVQFTTMVQVNEETGNRRPVMLTLLRVPRLSKNSKSSNGQELEKTLEESKETDIKHKENKGNDIPLALESTNTEKEASLDETKIGEILIQGLTEDMVTVLIRACVSMLGVPVDPDTLHATLRLCLRLTRDHKYAMMFAELKSTRMILNLTQSSGFNGFTPLVTLLLRHIIEDPCTLRHTMEKVVRSAATSGAGSTTSGVVSGSLGSREINYILRVLGPAACRNPDIFTEVANCCIRIALPAPRGSGTASDDEFENLRIKGPNAVQLVKTTPLKPSSLPVIPDTIKEVIYDMLNALAAYHAPEEADKSDPKPGGTTQEVGQLLQDMGDDVYQQYRSLTRQSSDFDTQSGFSLNSQVFAADGAPAETSTTGTSQGEASTPEETREGKKDKEGDRTSEEGKQKSKGSKPLMPTSTILRLLAELVRSYVGIATLIANYSYTVGQSELIKEDCSVLAFVLDHLLPHTQNAEDKDTPALARLFLASLAAAGSGTDAQVALVNEVKAALGRALAMAESTEKHARLQAVMCIISTIMESCPSTSSFYSSATAKTQHNGMNNIIRLFLKKGLVNDLARVPHSLDLSSPNMANTVNAALKPLETLSRIVNQPSSLFGSKSASSKNKSEQDAQGASQDSSSHQQDPGEPGEAEVQEEDHDVTQTEVADGDIMDGEAETDSVVIAGQPEVLSSQEMQVENELEDLIDELLERDGGSGNSTIIVSRSGEDESQEDVLMDEAPSNLSQASTLQANREDSMNILDPEDEEEHTQEEDSSGSNEDEDDSQDEEEEEEEDEEDDQEDDEGEEGDEDDDDDGSEMELDEDYPDMNASPLVRFERFDREDDLIIEFDNMFSSATDIPPSPGNIPTTHPLMVRHADHSSLTLGSGSSTTRLTQGIGRSQRTLRQLTANTGHTIHVHYPGNRQPNPPLILQRLLGPSAAADILQLSSSLPLQSRGRARLLVGNDDVHIIARSDDELLDDFFHDQSTATSQAGTLSSIPTALTRWTEECKVLDAESMHDCVSVVKVPIVNHLEFLRDEELEERREKRRKQLAEEETKIIDKGKEDKENRDQSAQCTVTKTNDSTEQNVSDGTPMPDSYPTTPSSTDAPTSESKETLGTLQPSQQQPALPPPPSLGEIPQELQSPAEEVANSTQLLMPIELEELGPTRPSGEAETTQMELSPAPTITSLSPERAEDSDALTAVSSQLEGSPMDTSSLASCTLEEAVGDTPAAGSSEQPTAGSSTPGDAPSVVAEVQGRPDVSRESNQPPEDSSPPASSESSSTRDSAVAISGADSRGILEEPLPSTSSEEEDPLAGISLPEGVDPSFLAALPDDIRREVLQNQLGIRPPTRSAPSSNSSAPAVVGNPGVTEVSPEFLAALPPAIQEEVLAQQRAEQQRRELAQNASSDTPMDPVTFIQTLPSDLRRSVLEDMEDSVLAVMPPDIAAEAQALRREQEARQRQLMHERLFGHSSTSALSAILRSPAFTSRLSGNRGVQYTRLAVQRGGTFQMGGSSSHNRPSGSNVDTLLRLRGRLLLDHEALSCLLVLLFVDEPKLNTSRLHRVLRNLCYHAQTRHWVIRSLLSILQRSSESELCIETPKLSTSEERGKKSSKSCASSSHENRPLDLLHKMESKSSNQLSWLSVSMDAALGCRTNIFQIQRSGGRKHTEKHASSGSTVHIHPQAAPVVCRHVLDTLIQLAKVFPSHFTQQRTKETNCESDRERGSKQACSPCSSQSSSSGICTDFWDLLVKLDNMNVSRKGKNSVKSVPVSSGGEGETSPHSLEASPLGQLMNMLSHPVIRRSSLLTEKLLRLLSLISIALPENKVSEVQTNSSNSGSSTAATSNTSTTTTTTTTATAPTPTPPAATTPVTSAPALVAATAISTITVAASTTVTTPTTATTTVSTSTTKGSKSPAKVGEGGSGIDFKMVSSGLTENQLQLSVEVLTSHSCSEEGLEDAANVLLQLSRGDSGTRDTVLKLLLNGARHLGYTLCKQIGTLLAELREYNLEQQRRAQCETLSPDGLPEEQPQTTKLKGKMQSRFDMAENVVIVASQKRPLGGRELQLPSMSMLTSKTSTQKFFLRVLQVIIQLRDDTRRANKKAKQTGRLGSSGLGSASSIQAAVRQLEAEADAIIQMVREGQRARRQQQAATSESSNQSETSVRREESPMDVDQPSPSAQDTQSIVISDGTPQGEKEKEEKPPELPLLSEQLSLDELWDMLGECLKELEESHDQHAVLVLQPAVEAFFLVHATERESKPPVRDTRESQLAHIKDEPPPLSPAPLTPATPSSLDPFFSREPSSMHISSSLPPDTQKFLRFAETHRTVLNQILRQSTTHLADGPFAVLVDYIRVLDFDVKRKYFRQELERLDEGLRKEDMAVHVRRDHVFEDSYRELHRKSPEEMKNRLYIVFEGEEGQDAGGLLREWYMIISREMFNPMYALFRTSPGDRVTYTINPSSHCNPNHLSYFKFVGRIVAKAVYDNRLLECYFTRSFYKHILGKSVRYTDMESEDYHFYQGLVYLLENDVSTLGYDLTFSTEVQEFGVCEVRDLKPNGANILVTEENKKEYVHLVCQMRMTGAIRKQLAAFLEGFYEIIPKRLISIFTEQELELLISGLPTIDIDDLKSNTEYHKYQSNSIQIQWFWRALRSFDQADRAKFLQFVTGTSKVPLQGFAALEGMNGIQKFQIHRDDRSTDRLPSAHTCFNQLDLPAYESFEKLRHMLLLAIQECSEGFGLA</sequence>